<comment type="function">
    <text evidence="1">Catalyzes the attachment of proline to tRNA(Pro) in a two-step reaction: proline is first activated by ATP to form Pro-AMP and then transferred to the acceptor end of tRNA(Pro). As ProRS can inadvertently accommodate and process non-cognate amino acids such as alanine and cysteine, to avoid such errors it has two additional distinct editing activities against alanine. One activity is designated as 'pretransfer' editing and involves the tRNA(Pro)-independent hydrolysis of activated Ala-AMP. The other activity is designated 'posttransfer' editing and involves deacylation of mischarged Ala-tRNA(Pro). The misacylated Cys-tRNA(Pro) is not edited by ProRS.</text>
</comment>
<comment type="catalytic activity">
    <reaction evidence="1">
        <text>tRNA(Pro) + L-proline + ATP = L-prolyl-tRNA(Pro) + AMP + diphosphate</text>
        <dbReference type="Rhea" id="RHEA:14305"/>
        <dbReference type="Rhea" id="RHEA-COMP:9700"/>
        <dbReference type="Rhea" id="RHEA-COMP:9702"/>
        <dbReference type="ChEBI" id="CHEBI:30616"/>
        <dbReference type="ChEBI" id="CHEBI:33019"/>
        <dbReference type="ChEBI" id="CHEBI:60039"/>
        <dbReference type="ChEBI" id="CHEBI:78442"/>
        <dbReference type="ChEBI" id="CHEBI:78532"/>
        <dbReference type="ChEBI" id="CHEBI:456215"/>
        <dbReference type="EC" id="6.1.1.15"/>
    </reaction>
</comment>
<comment type="subunit">
    <text evidence="1">Homodimer.</text>
</comment>
<comment type="subcellular location">
    <subcellularLocation>
        <location evidence="1">Cytoplasm</location>
    </subcellularLocation>
</comment>
<comment type="domain">
    <text evidence="1">Consists of three domains: the N-terminal catalytic domain, the editing domain and the C-terminal anticodon-binding domain.</text>
</comment>
<comment type="similarity">
    <text evidence="1">Belongs to the class-II aminoacyl-tRNA synthetase family. ProS type 1 subfamily.</text>
</comment>
<evidence type="ECO:0000255" key="1">
    <source>
        <dbReference type="HAMAP-Rule" id="MF_01569"/>
    </source>
</evidence>
<protein>
    <recommendedName>
        <fullName evidence="1">Proline--tRNA ligase</fullName>
        <ecNumber evidence="1">6.1.1.15</ecNumber>
    </recommendedName>
    <alternativeName>
        <fullName evidence="1">Prolyl-tRNA synthetase</fullName>
        <shortName evidence="1">ProRS</shortName>
    </alternativeName>
</protein>
<accession>Q667L4</accession>
<keyword id="KW-0030">Aminoacyl-tRNA synthetase</keyword>
<keyword id="KW-0067">ATP-binding</keyword>
<keyword id="KW-0963">Cytoplasm</keyword>
<keyword id="KW-0436">Ligase</keyword>
<keyword id="KW-0547">Nucleotide-binding</keyword>
<keyword id="KW-0648">Protein biosynthesis</keyword>
<feature type="chain" id="PRO_0000248824" description="Proline--tRNA ligase">
    <location>
        <begin position="1"/>
        <end position="572"/>
    </location>
</feature>
<proteinExistence type="inferred from homology"/>
<dbReference type="EC" id="6.1.1.15" evidence="1"/>
<dbReference type="EMBL" id="BX936398">
    <property type="protein sequence ID" value="CAH22216.1"/>
    <property type="molecule type" value="Genomic_DNA"/>
</dbReference>
<dbReference type="RefSeq" id="WP_011192856.1">
    <property type="nucleotide sequence ID" value="NC_006155.1"/>
</dbReference>
<dbReference type="SMR" id="Q667L4"/>
<dbReference type="KEGG" id="ypo:BZ17_3643"/>
<dbReference type="KEGG" id="yps:YPTB2978"/>
<dbReference type="PATRIC" id="fig|273123.14.peg.3824"/>
<dbReference type="Proteomes" id="UP000001011">
    <property type="component" value="Chromosome"/>
</dbReference>
<dbReference type="GO" id="GO:0005829">
    <property type="term" value="C:cytosol"/>
    <property type="evidence" value="ECO:0007669"/>
    <property type="project" value="TreeGrafter"/>
</dbReference>
<dbReference type="GO" id="GO:0002161">
    <property type="term" value="F:aminoacyl-tRNA deacylase activity"/>
    <property type="evidence" value="ECO:0007669"/>
    <property type="project" value="InterPro"/>
</dbReference>
<dbReference type="GO" id="GO:0005524">
    <property type="term" value="F:ATP binding"/>
    <property type="evidence" value="ECO:0007669"/>
    <property type="project" value="UniProtKB-UniRule"/>
</dbReference>
<dbReference type="GO" id="GO:0004827">
    <property type="term" value="F:proline-tRNA ligase activity"/>
    <property type="evidence" value="ECO:0007669"/>
    <property type="project" value="UniProtKB-UniRule"/>
</dbReference>
<dbReference type="GO" id="GO:0006433">
    <property type="term" value="P:prolyl-tRNA aminoacylation"/>
    <property type="evidence" value="ECO:0007669"/>
    <property type="project" value="UniProtKB-UniRule"/>
</dbReference>
<dbReference type="CDD" id="cd04334">
    <property type="entry name" value="ProRS-INS"/>
    <property type="match status" value="1"/>
</dbReference>
<dbReference type="CDD" id="cd00861">
    <property type="entry name" value="ProRS_anticodon_short"/>
    <property type="match status" value="1"/>
</dbReference>
<dbReference type="CDD" id="cd00779">
    <property type="entry name" value="ProRS_core_prok"/>
    <property type="match status" value="1"/>
</dbReference>
<dbReference type="FunFam" id="3.30.930.10:FF:000012">
    <property type="entry name" value="Proline--tRNA ligase"/>
    <property type="match status" value="1"/>
</dbReference>
<dbReference type="FunFam" id="3.30.930.10:FF:000097">
    <property type="entry name" value="Proline--tRNA ligase"/>
    <property type="match status" value="1"/>
</dbReference>
<dbReference type="FunFam" id="3.40.50.800:FF:000006">
    <property type="entry name" value="Proline--tRNA ligase"/>
    <property type="match status" value="1"/>
</dbReference>
<dbReference type="FunFam" id="3.90.960.10:FF:000001">
    <property type="entry name" value="Proline--tRNA ligase"/>
    <property type="match status" value="1"/>
</dbReference>
<dbReference type="Gene3D" id="3.40.50.800">
    <property type="entry name" value="Anticodon-binding domain"/>
    <property type="match status" value="1"/>
</dbReference>
<dbReference type="Gene3D" id="3.30.930.10">
    <property type="entry name" value="Bira Bifunctional Protein, Domain 2"/>
    <property type="match status" value="2"/>
</dbReference>
<dbReference type="Gene3D" id="3.90.960.10">
    <property type="entry name" value="YbaK/aminoacyl-tRNA synthetase-associated domain"/>
    <property type="match status" value="1"/>
</dbReference>
<dbReference type="HAMAP" id="MF_01569">
    <property type="entry name" value="Pro_tRNA_synth_type1"/>
    <property type="match status" value="1"/>
</dbReference>
<dbReference type="InterPro" id="IPR002314">
    <property type="entry name" value="aa-tRNA-synt_IIb"/>
</dbReference>
<dbReference type="InterPro" id="IPR006195">
    <property type="entry name" value="aa-tRNA-synth_II"/>
</dbReference>
<dbReference type="InterPro" id="IPR045864">
    <property type="entry name" value="aa-tRNA-synth_II/BPL/LPL"/>
</dbReference>
<dbReference type="InterPro" id="IPR004154">
    <property type="entry name" value="Anticodon-bd"/>
</dbReference>
<dbReference type="InterPro" id="IPR036621">
    <property type="entry name" value="Anticodon-bd_dom_sf"/>
</dbReference>
<dbReference type="InterPro" id="IPR002316">
    <property type="entry name" value="Pro-tRNA-ligase_IIa"/>
</dbReference>
<dbReference type="InterPro" id="IPR004500">
    <property type="entry name" value="Pro-tRNA-synth_IIa_bac-type"/>
</dbReference>
<dbReference type="InterPro" id="IPR023717">
    <property type="entry name" value="Pro-tRNA-Synthase_IIa_type1"/>
</dbReference>
<dbReference type="InterPro" id="IPR050062">
    <property type="entry name" value="Pro-tRNA_synthetase"/>
</dbReference>
<dbReference type="InterPro" id="IPR044140">
    <property type="entry name" value="ProRS_anticodon_short"/>
</dbReference>
<dbReference type="InterPro" id="IPR033730">
    <property type="entry name" value="ProRS_core_prok"/>
</dbReference>
<dbReference type="InterPro" id="IPR036754">
    <property type="entry name" value="YbaK/aa-tRNA-synt-asso_dom_sf"/>
</dbReference>
<dbReference type="InterPro" id="IPR007214">
    <property type="entry name" value="YbaK/aa-tRNA-synth-assoc-dom"/>
</dbReference>
<dbReference type="NCBIfam" id="NF006625">
    <property type="entry name" value="PRK09194.1"/>
    <property type="match status" value="1"/>
</dbReference>
<dbReference type="NCBIfam" id="TIGR00409">
    <property type="entry name" value="proS_fam_II"/>
    <property type="match status" value="1"/>
</dbReference>
<dbReference type="PANTHER" id="PTHR42753">
    <property type="entry name" value="MITOCHONDRIAL RIBOSOME PROTEIN L39/PROLYL-TRNA LIGASE FAMILY MEMBER"/>
    <property type="match status" value="1"/>
</dbReference>
<dbReference type="PANTHER" id="PTHR42753:SF2">
    <property type="entry name" value="PROLINE--TRNA LIGASE"/>
    <property type="match status" value="1"/>
</dbReference>
<dbReference type="Pfam" id="PF03129">
    <property type="entry name" value="HGTP_anticodon"/>
    <property type="match status" value="1"/>
</dbReference>
<dbReference type="Pfam" id="PF00587">
    <property type="entry name" value="tRNA-synt_2b"/>
    <property type="match status" value="1"/>
</dbReference>
<dbReference type="Pfam" id="PF04073">
    <property type="entry name" value="tRNA_edit"/>
    <property type="match status" value="1"/>
</dbReference>
<dbReference type="PIRSF" id="PIRSF001535">
    <property type="entry name" value="ProRS_1"/>
    <property type="match status" value="1"/>
</dbReference>
<dbReference type="PRINTS" id="PR01046">
    <property type="entry name" value="TRNASYNTHPRO"/>
</dbReference>
<dbReference type="SUPFAM" id="SSF52954">
    <property type="entry name" value="Class II aaRS ABD-related"/>
    <property type="match status" value="1"/>
</dbReference>
<dbReference type="SUPFAM" id="SSF55681">
    <property type="entry name" value="Class II aaRS and biotin synthetases"/>
    <property type="match status" value="1"/>
</dbReference>
<dbReference type="SUPFAM" id="SSF55826">
    <property type="entry name" value="YbaK/ProRS associated domain"/>
    <property type="match status" value="1"/>
</dbReference>
<dbReference type="PROSITE" id="PS50862">
    <property type="entry name" value="AA_TRNA_LIGASE_II"/>
    <property type="match status" value="1"/>
</dbReference>
<sequence>MRTSQYLLSTQKETPADAEVISHQLMLRAGMIRKLASGLYTWLPTGVRVLKKVENIVREEMNNAGAIEVSMPVVQPADLWQESGRWEQYGPELLRFVDRGERPFVLGPTHEEVITDLIRGEINSYKQLPLNFFQIQTKFRDELRPRFGVMRAREFLMKDAYSFHTTQESLQETYDAMYTAYSKIFSRMDLNFRAVLADTGSIGGSASHEFQVLAESGEDDIVFSTGSDYAANIEFAEALAPTEPRAPATEELRIVDTPNAKTIAELVEQFKLPIEKTVKTLLVHAHEESGHKLVALLVRGDHDLNEIKAEKLPQVAKPLTFASEEEIRAAIGAGPGSLGPVNLSLPVIADRSVAVMSDFGAGANIDGKHYFGINWERDLALPLVADLRNVVEGDISPDGKGTLQIKRGIEVGHIFQLGTKYSEAMKATVQGEDGRNQVMTMGCYGIGVSRVVAAAIEQNHDDRGIIWPDAIAPFQVAILPMNMHKSFRVKELAEELYTTLRSHGIDVILDDRKERPGVMFADMELIGVPHNIVIGDRNLDSEEVEYKNRRVGEKQMIKTSEIVEFLLSQIKR</sequence>
<organism>
    <name type="scientific">Yersinia pseudotuberculosis serotype I (strain IP32953)</name>
    <dbReference type="NCBI Taxonomy" id="273123"/>
    <lineage>
        <taxon>Bacteria</taxon>
        <taxon>Pseudomonadati</taxon>
        <taxon>Pseudomonadota</taxon>
        <taxon>Gammaproteobacteria</taxon>
        <taxon>Enterobacterales</taxon>
        <taxon>Yersiniaceae</taxon>
        <taxon>Yersinia</taxon>
    </lineage>
</organism>
<gene>
    <name evidence="1" type="primary">proS</name>
    <name type="ordered locus">YPTB2978</name>
</gene>
<reference key="1">
    <citation type="journal article" date="2004" name="Proc. Natl. Acad. Sci. U.S.A.">
        <title>Insights into the evolution of Yersinia pestis through whole-genome comparison with Yersinia pseudotuberculosis.</title>
        <authorList>
            <person name="Chain P.S.G."/>
            <person name="Carniel E."/>
            <person name="Larimer F.W."/>
            <person name="Lamerdin J."/>
            <person name="Stoutland P.O."/>
            <person name="Regala W.M."/>
            <person name="Georgescu A.M."/>
            <person name="Vergez L.M."/>
            <person name="Land M.L."/>
            <person name="Motin V.L."/>
            <person name="Brubaker R.R."/>
            <person name="Fowler J."/>
            <person name="Hinnebusch J."/>
            <person name="Marceau M."/>
            <person name="Medigue C."/>
            <person name="Simonet M."/>
            <person name="Chenal-Francisque V."/>
            <person name="Souza B."/>
            <person name="Dacheux D."/>
            <person name="Elliott J.M."/>
            <person name="Derbise A."/>
            <person name="Hauser L.J."/>
            <person name="Garcia E."/>
        </authorList>
    </citation>
    <scope>NUCLEOTIDE SEQUENCE [LARGE SCALE GENOMIC DNA]</scope>
    <source>
        <strain>IP32953</strain>
    </source>
</reference>
<name>SYP_YERPS</name>